<organismHost>
    <name type="scientific">Homo sapiens</name>
    <name type="common">Human</name>
    <dbReference type="NCBI Taxonomy" id="9606"/>
</organismHost>
<keyword id="KW-0014">AIDS</keyword>
<keyword id="KW-1032">Host cell membrane</keyword>
<keyword id="KW-1043">Host membrane</keyword>
<keyword id="KW-0945">Host-virus interaction</keyword>
<keyword id="KW-0449">Lipoprotein</keyword>
<keyword id="KW-0472">Membrane</keyword>
<keyword id="KW-0519">Myristate</keyword>
<keyword id="KW-0899">Viral immunoevasion</keyword>
<keyword id="KW-0843">Virulence</keyword>
<organism>
    <name type="scientific">Human immunodeficiency virus type 2 subtype A (isolate SBLISY)</name>
    <name type="common">HIV-2</name>
    <dbReference type="NCBI Taxonomy" id="11718"/>
    <lineage>
        <taxon>Viruses</taxon>
        <taxon>Riboviria</taxon>
        <taxon>Pararnavirae</taxon>
        <taxon>Artverviricota</taxon>
        <taxon>Revtraviricetes</taxon>
        <taxon>Ortervirales</taxon>
        <taxon>Retroviridae</taxon>
        <taxon>Orthoretrovirinae</taxon>
        <taxon>Lentivirus</taxon>
        <taxon>Human immunodeficiency virus 2</taxon>
    </lineage>
</organism>
<reference key="1">
    <citation type="journal article" date="1989" name="Proc. Natl. Acad. Sci. U.S.A.">
        <title>Molecular and biological characterization of a replication competent human immunodeficiency type 2 (HIV-2) proviral clone.</title>
        <authorList>
            <person name="Franchini G."/>
            <person name="Fargnoli K.A."/>
            <person name="Giombini F."/>
            <person name="Jagodzinski L.L."/>
            <person name="de Rossi A."/>
            <person name="Bosch M."/>
            <person name="Biberfeld G."/>
            <person name="Fenyo A.M."/>
            <person name="Albert J."/>
            <person name="Gallo R.C."/>
            <person name="Wong-Staal F."/>
        </authorList>
    </citation>
    <scope>NUCLEOTIDE SEQUENCE [GENOMIC DNA]</scope>
</reference>
<name>NEF_HV2SB</name>
<evidence type="ECO:0000250" key="1"/>
<evidence type="ECO:0000256" key="2">
    <source>
        <dbReference type="SAM" id="MobiDB-lite"/>
    </source>
</evidence>
<evidence type="ECO:0000305" key="3"/>
<feature type="initiator methionine" description="Removed; by host" evidence="1">
    <location>
        <position position="1"/>
    </location>
</feature>
<feature type="chain" id="PRO_0000085235" description="Protein Nef">
    <location>
        <begin position="2"/>
        <end position="256"/>
    </location>
</feature>
<feature type="region of interest" description="Disordered" evidence="2">
    <location>
        <begin position="33"/>
        <end position="100"/>
    </location>
</feature>
<feature type="region of interest" description="Acidic">
    <location>
        <begin position="88"/>
        <end position="96"/>
    </location>
</feature>
<feature type="region of interest" description="Mediates dimerization" evidence="1">
    <location>
        <begin position="140"/>
        <end position="156"/>
    </location>
</feature>
<feature type="short sequence motif" description="PxxP">
    <location>
        <begin position="104"/>
        <end position="107"/>
    </location>
</feature>
<feature type="compositionally biased region" description="Acidic residues" evidence="2">
    <location>
        <begin position="88"/>
        <end position="97"/>
    </location>
</feature>
<feature type="lipid moiety-binding region" description="N-myristoyl glycine; by host" evidence="1">
    <location>
        <position position="2"/>
    </location>
</feature>
<protein>
    <recommendedName>
        <fullName>Protein Nef</fullName>
    </recommendedName>
    <alternativeName>
        <fullName>3'ORF</fullName>
    </alternativeName>
    <alternativeName>
        <fullName>Negative factor</fullName>
        <shortName>F-protein</shortName>
    </alternativeName>
</protein>
<comment type="function">
    <text evidence="1">Factor of infectivity and pathogenicity, required for optimal virus replication. Alters numerous pathways of T-lymphocyte function and down-regulates immunity surface molecules in order to evade host defense and increase viral infectivity. Alters the functionality of other immunity cells, like dendritic cells, monocytes/macrophages and NK cells. One of the earliest and most abundantly expressed viral proteins (By similarity).</text>
</comment>
<comment type="function">
    <text evidence="1">In infected CD4(+) T-lymphocytes, down-regulates cell surface expression of CD4, CD28, CD3, and MHC-I or MHC-II molecules.</text>
</comment>
<comment type="function">
    <text evidence="1">Interferes with TCR signaling from the cell membrane. Interacts with CD247/TCRZ (TCR zeta chain) and exert potent down-regulation of cell surface TCR/CD3 complexes (By similarity).</text>
</comment>
<comment type="function">
    <text evidence="1">Plays a role in optimizing the host cell environment for viral replication without causing cell death by apoptosis. Protects the infected cells from apoptosis in order to keep them alive until the next virus generation is ready to strike (By similarity).</text>
</comment>
<comment type="function">
    <text evidence="1">Extracellular Nef protein targets CD4(+) T-lymphocytes for apoptosis by interacting with CXCR4 surface receptors.</text>
</comment>
<comment type="subunit">
    <text evidence="1">Homodimer. Interacts with host CD247/TCRZ; this interaction induces down-regulation of cell surface TCR/CD3 complexes.</text>
</comment>
<comment type="subcellular location">
    <subcellularLocation>
        <location evidence="1">Host cell membrane</location>
        <topology evidence="1">Lipid-anchor</topology>
        <orientation evidence="1">Cytoplasmic side</orientation>
    </subcellularLocation>
    <text evidence="1">Associates with the inner plasma membrane through its N-terminal domain.</text>
</comment>
<comment type="domain">
    <text evidence="1">The N-terminal domain is composed of the N-myristoyl glycine and of a cluster of positively charged amino acids. It is required for inner plasma membrane targeting of Nef and virion incorporation, and thereby for infectivity (By similarity).</text>
</comment>
<comment type="similarity">
    <text evidence="3">Belongs to the lentivirus primate group Nef protein family.</text>
</comment>
<accession>P12447</accession>
<dbReference type="EMBL" id="J04498">
    <property type="protein sequence ID" value="AAB00753.1"/>
    <property type="molecule type" value="Genomic_DNA"/>
</dbReference>
<dbReference type="SMR" id="P12447"/>
<dbReference type="Proteomes" id="UP000007427">
    <property type="component" value="Segment"/>
</dbReference>
<dbReference type="GO" id="GO:0020002">
    <property type="term" value="C:host cell plasma membrane"/>
    <property type="evidence" value="ECO:0007669"/>
    <property type="project" value="UniProtKB-SubCell"/>
</dbReference>
<dbReference type="GO" id="GO:0016020">
    <property type="term" value="C:membrane"/>
    <property type="evidence" value="ECO:0007669"/>
    <property type="project" value="UniProtKB-KW"/>
</dbReference>
<dbReference type="GO" id="GO:0005525">
    <property type="term" value="F:GTP binding"/>
    <property type="evidence" value="ECO:0007669"/>
    <property type="project" value="InterPro"/>
</dbReference>
<dbReference type="Gene3D" id="3.30.62.10">
    <property type="entry name" value="Nef Regulatory Factor"/>
    <property type="match status" value="1"/>
</dbReference>
<dbReference type="InterPro" id="IPR027481">
    <property type="entry name" value="HIV-1_Nef_core_sf"/>
</dbReference>
<dbReference type="InterPro" id="IPR001558">
    <property type="entry name" value="HIV_Nef"/>
</dbReference>
<dbReference type="Pfam" id="PF00469">
    <property type="entry name" value="F-protein"/>
    <property type="match status" value="1"/>
</dbReference>
<dbReference type="SUPFAM" id="SSF55671">
    <property type="entry name" value="Regulatory factor Nef"/>
    <property type="match status" value="1"/>
</dbReference>
<gene>
    <name type="primary">nef</name>
</gene>
<proteinExistence type="inferred from homology"/>
<sequence>MGASGSKKRSRPSRGLQERLLRARGGACGGLWDESEGGYSQFHEGSGREQKLPSCEGQRYQQGDFMNTPWRTPATEKEKESYRQQNMDDVDSDDDDLVGVSDTSRVPLRAMTYRMAVDMSDLIKDKGGLEGMYYSERRHRILDIYLEKEEGIIPDWQNYTHGLGVRYPMFFGWLWKLVPVTVPQEGEDTETLCLMHSAQVSRFDDPHGETLVWKFDPMLAHEYTTFILYPEEFGHKSGMEEDDWKAKLKARGIPFS</sequence>